<dbReference type="EMBL" id="BC075254">
    <property type="protein sequence ID" value="AAH75254.1"/>
    <property type="molecule type" value="mRNA"/>
</dbReference>
<dbReference type="RefSeq" id="NP_001086490.1">
    <property type="nucleotide sequence ID" value="NM_001093021.1"/>
</dbReference>
<dbReference type="ESTHER" id="xenla-tm53b">
    <property type="family name" value="Duf_829"/>
</dbReference>
<dbReference type="DNASU" id="446324"/>
<dbReference type="GeneID" id="446324"/>
<dbReference type="KEGG" id="xla:446324"/>
<dbReference type="AGR" id="Xenbase:XB-GENE-6251497"/>
<dbReference type="CTD" id="446324"/>
<dbReference type="Xenbase" id="XB-GENE-6251497">
    <property type="gene designation" value="tmem53.L"/>
</dbReference>
<dbReference type="OrthoDB" id="77878at2759"/>
<dbReference type="Proteomes" id="UP000186698">
    <property type="component" value="Chromosome 4L"/>
</dbReference>
<dbReference type="Bgee" id="446324">
    <property type="expression patterns" value="Expressed in testis and 19 other cell types or tissues"/>
</dbReference>
<dbReference type="GO" id="GO:0031965">
    <property type="term" value="C:nuclear membrane"/>
    <property type="evidence" value="ECO:0000250"/>
    <property type="project" value="UniProtKB"/>
</dbReference>
<dbReference type="GO" id="GO:0005640">
    <property type="term" value="C:nuclear outer membrane"/>
    <property type="evidence" value="ECO:0000250"/>
    <property type="project" value="UniProtKB"/>
</dbReference>
<dbReference type="GO" id="GO:0030514">
    <property type="term" value="P:negative regulation of BMP signaling pathway"/>
    <property type="evidence" value="ECO:0000250"/>
    <property type="project" value="UniProtKB"/>
</dbReference>
<dbReference type="GO" id="GO:0030279">
    <property type="term" value="P:negative regulation of ossification"/>
    <property type="evidence" value="ECO:0000250"/>
    <property type="project" value="UniProtKB"/>
</dbReference>
<dbReference type="GO" id="GO:0045668">
    <property type="term" value="P:negative regulation of osteoblast differentiation"/>
    <property type="evidence" value="ECO:0000250"/>
    <property type="project" value="UniProtKB"/>
</dbReference>
<dbReference type="GO" id="GO:0046822">
    <property type="term" value="P:regulation of nucleocytoplasmic transport"/>
    <property type="evidence" value="ECO:0000250"/>
    <property type="project" value="UniProtKB"/>
</dbReference>
<dbReference type="InterPro" id="IPR029058">
    <property type="entry name" value="AB_hydrolase_fold"/>
</dbReference>
<dbReference type="InterPro" id="IPR008547">
    <property type="entry name" value="DUF829_TMEM53"/>
</dbReference>
<dbReference type="PANTHER" id="PTHR12265">
    <property type="entry name" value="TRANSMEMBRANE PROTEIN 53"/>
    <property type="match status" value="1"/>
</dbReference>
<dbReference type="PANTHER" id="PTHR12265:SF30">
    <property type="entry name" value="TRANSMEMBRANE PROTEIN 53"/>
    <property type="match status" value="1"/>
</dbReference>
<dbReference type="Pfam" id="PF05705">
    <property type="entry name" value="DUF829"/>
    <property type="match status" value="1"/>
</dbReference>
<dbReference type="SUPFAM" id="SSF53474">
    <property type="entry name" value="alpha/beta-Hydrolases"/>
    <property type="match status" value="1"/>
</dbReference>
<organism>
    <name type="scientific">Xenopus laevis</name>
    <name type="common">African clawed frog</name>
    <dbReference type="NCBI Taxonomy" id="8355"/>
    <lineage>
        <taxon>Eukaryota</taxon>
        <taxon>Metazoa</taxon>
        <taxon>Chordata</taxon>
        <taxon>Craniata</taxon>
        <taxon>Vertebrata</taxon>
        <taxon>Euteleostomi</taxon>
        <taxon>Amphibia</taxon>
        <taxon>Batrachia</taxon>
        <taxon>Anura</taxon>
        <taxon>Pipoidea</taxon>
        <taxon>Pipidae</taxon>
        <taxon>Xenopodinae</taxon>
        <taxon>Xenopus</taxon>
        <taxon>Xenopus</taxon>
    </lineage>
</organism>
<evidence type="ECO:0000250" key="1">
    <source>
        <dbReference type="UniProtKB" id="Q9D0Z3"/>
    </source>
</evidence>
<evidence type="ECO:0000255" key="2"/>
<evidence type="ECO:0000305" key="3"/>
<reference key="1">
    <citation type="submission" date="2004-06" db="EMBL/GenBank/DDBJ databases">
        <authorList>
            <consortium name="NIH - Xenopus Gene Collection (XGC) project"/>
        </authorList>
    </citation>
    <scope>NUCLEOTIDE SEQUENCE [LARGE SCALE MRNA]</scope>
    <source>
        <tissue>Brain</tissue>
    </source>
</reference>
<accession>Q6DJC8</accession>
<keyword id="KW-0217">Developmental protein</keyword>
<keyword id="KW-0472">Membrane</keyword>
<keyword id="KW-0539">Nucleus</keyword>
<keyword id="KW-1185">Reference proteome</keyword>
<keyword id="KW-0812">Transmembrane</keyword>
<keyword id="KW-1133">Transmembrane helix</keyword>
<feature type="chain" id="PRO_0000284122" description="Transmembrane protein 53-B">
    <location>
        <begin position="1"/>
        <end position="285"/>
    </location>
</feature>
<feature type="transmembrane region" description="Helical" evidence="2">
    <location>
        <begin position="165"/>
        <end position="185"/>
    </location>
</feature>
<proteinExistence type="evidence at transcript level"/>
<name>TM53B_XENLA</name>
<sequence length="285" mass="32673">MGDPELDYTIEFPEPSLQGCPWDPEREPVVILLGWGGCKDQYLAKYSAIYHNQGCTVIKYTAAWNAVFISESLGFSSLREDAKKLLELLFDYEIEKSPILFHVFSNGGFMLYRYIVELLHSHCRLNKLHVVGTIFDSAPGNRNVIGSVRALDTILRTSTNNAIRFLALAAFAIMVIILRIVLYPVTKFLHENHYDAMKKDSSRWPQLYLYSRADPIISYIDVESMIAARRRCCLPTEALDFGKSEHVSHFRRFPHRYSEMCTSFLRDCVRKAAVSMLTSEHPVSF</sequence>
<gene>
    <name type="primary">tmem53-b</name>
</gene>
<comment type="function">
    <text evidence="1">Ensures normal bone formation, through the negative regulation of bone morphogenetic protein (BMP) signaling in osteoblast lineage cells by blocking cytoplasm-nucleus translocation of phosphorylated SMAD proteins.</text>
</comment>
<comment type="subcellular location">
    <subcellularLocation>
        <location evidence="1">Nucleus outer membrane</location>
        <topology evidence="3">Single-pass membrane protein</topology>
    </subcellularLocation>
</comment>
<comment type="similarity">
    <text evidence="3">Belongs to the TMEM53 family.</text>
</comment>
<protein>
    <recommendedName>
        <fullName>Transmembrane protein 53-B</fullName>
    </recommendedName>
</protein>